<accession>P65996</accession>
<accession>Q99Z33</accession>
<proteinExistence type="inferred from homology"/>
<feature type="chain" id="PRO_0000190403" description="Recombination protein RecR">
    <location>
        <begin position="1"/>
        <end position="198"/>
    </location>
</feature>
<feature type="domain" description="Toprim" evidence="1">
    <location>
        <begin position="80"/>
        <end position="175"/>
    </location>
</feature>
<feature type="zinc finger region" description="C4-type" evidence="1">
    <location>
        <begin position="57"/>
        <end position="72"/>
    </location>
</feature>
<sequence length="198" mass="21645">MLYPTPIAKLIDSYSKLPGIGIKTATRLAFYTIGMSNEDVNDFAKNLLAAKRELTYCSICGNLTDDDPCHICTDTSRDQTTILVVEDAKDVSAMEKIQEYHGYYHVLHGLISPMNGVGPDDINLKSLITRLMDGKVSEVIVATNATADGEATSMYISRVLKPAGIKVTRLARGLAVGSDIEYADEVTLLRAIENRTEL</sequence>
<protein>
    <recommendedName>
        <fullName evidence="1">Recombination protein RecR</fullName>
    </recommendedName>
</protein>
<reference key="1">
    <citation type="journal article" date="2002" name="Proc. Natl. Acad. Sci. U.S.A.">
        <title>Genome sequence and comparative microarray analysis of serotype M18 group A Streptococcus strains associated with acute rheumatic fever outbreaks.</title>
        <authorList>
            <person name="Smoot J.C."/>
            <person name="Barbian K.D."/>
            <person name="Van Gompel J.J."/>
            <person name="Smoot L.M."/>
            <person name="Chaussee M.S."/>
            <person name="Sylva G.L."/>
            <person name="Sturdevant D.E."/>
            <person name="Ricklefs S.M."/>
            <person name="Porcella S.F."/>
            <person name="Parkins L.D."/>
            <person name="Beres S.B."/>
            <person name="Campbell D.S."/>
            <person name="Smith T.M."/>
            <person name="Zhang Q."/>
            <person name="Kapur V."/>
            <person name="Daly J.A."/>
            <person name="Veasy L.G."/>
            <person name="Musser J.M."/>
        </authorList>
    </citation>
    <scope>NUCLEOTIDE SEQUENCE [LARGE SCALE GENOMIC DNA]</scope>
    <source>
        <strain>MGAS8232</strain>
    </source>
</reference>
<name>RECR_STRP8</name>
<comment type="function">
    <text evidence="1">May play a role in DNA repair. It seems to be involved in an RecBC-independent recombinational process of DNA repair. It may act with RecF and RecO.</text>
</comment>
<comment type="similarity">
    <text evidence="1">Belongs to the RecR family.</text>
</comment>
<evidence type="ECO:0000255" key="1">
    <source>
        <dbReference type="HAMAP-Rule" id="MF_00017"/>
    </source>
</evidence>
<organism>
    <name type="scientific">Streptococcus pyogenes serotype M18 (strain MGAS8232)</name>
    <dbReference type="NCBI Taxonomy" id="186103"/>
    <lineage>
        <taxon>Bacteria</taxon>
        <taxon>Bacillati</taxon>
        <taxon>Bacillota</taxon>
        <taxon>Bacilli</taxon>
        <taxon>Lactobacillales</taxon>
        <taxon>Streptococcaceae</taxon>
        <taxon>Streptococcus</taxon>
    </lineage>
</organism>
<dbReference type="EMBL" id="AE009949">
    <property type="protein sequence ID" value="AAL98016.1"/>
    <property type="molecule type" value="Genomic_DNA"/>
</dbReference>
<dbReference type="RefSeq" id="WP_002983939.1">
    <property type="nucleotide sequence ID" value="NC_003485.1"/>
</dbReference>
<dbReference type="SMR" id="P65996"/>
<dbReference type="GeneID" id="69900624"/>
<dbReference type="KEGG" id="spm:spyM18_1432"/>
<dbReference type="HOGENOM" id="CLU_060739_1_0_9"/>
<dbReference type="GO" id="GO:0003677">
    <property type="term" value="F:DNA binding"/>
    <property type="evidence" value="ECO:0007669"/>
    <property type="project" value="UniProtKB-UniRule"/>
</dbReference>
<dbReference type="GO" id="GO:0008270">
    <property type="term" value="F:zinc ion binding"/>
    <property type="evidence" value="ECO:0007669"/>
    <property type="project" value="UniProtKB-KW"/>
</dbReference>
<dbReference type="GO" id="GO:0006310">
    <property type="term" value="P:DNA recombination"/>
    <property type="evidence" value="ECO:0007669"/>
    <property type="project" value="UniProtKB-UniRule"/>
</dbReference>
<dbReference type="GO" id="GO:0006281">
    <property type="term" value="P:DNA repair"/>
    <property type="evidence" value="ECO:0007669"/>
    <property type="project" value="UniProtKB-UniRule"/>
</dbReference>
<dbReference type="CDD" id="cd01025">
    <property type="entry name" value="TOPRIM_recR"/>
    <property type="match status" value="1"/>
</dbReference>
<dbReference type="Gene3D" id="3.30.60.80">
    <property type="match status" value="1"/>
</dbReference>
<dbReference type="Gene3D" id="3.40.1360.10">
    <property type="match status" value="1"/>
</dbReference>
<dbReference type="Gene3D" id="6.10.250.240">
    <property type="match status" value="1"/>
</dbReference>
<dbReference type="Gene3D" id="1.10.8.420">
    <property type="entry name" value="RecR Domain 1"/>
    <property type="match status" value="1"/>
</dbReference>
<dbReference type="HAMAP" id="MF_00017">
    <property type="entry name" value="RecR"/>
    <property type="match status" value="1"/>
</dbReference>
<dbReference type="InterPro" id="IPR000093">
    <property type="entry name" value="DNA_Rcmb_RecR"/>
</dbReference>
<dbReference type="InterPro" id="IPR023627">
    <property type="entry name" value="Rcmb_RecR"/>
</dbReference>
<dbReference type="InterPro" id="IPR015967">
    <property type="entry name" value="Rcmb_RecR_Znf"/>
</dbReference>
<dbReference type="InterPro" id="IPR006171">
    <property type="entry name" value="TOPRIM_dom"/>
</dbReference>
<dbReference type="InterPro" id="IPR034137">
    <property type="entry name" value="TOPRIM_RecR"/>
</dbReference>
<dbReference type="NCBIfam" id="TIGR00615">
    <property type="entry name" value="recR"/>
    <property type="match status" value="1"/>
</dbReference>
<dbReference type="PANTHER" id="PTHR30446">
    <property type="entry name" value="RECOMBINATION PROTEIN RECR"/>
    <property type="match status" value="1"/>
</dbReference>
<dbReference type="PANTHER" id="PTHR30446:SF0">
    <property type="entry name" value="RECOMBINATION PROTEIN RECR"/>
    <property type="match status" value="1"/>
</dbReference>
<dbReference type="Pfam" id="PF21175">
    <property type="entry name" value="RecR_C"/>
    <property type="match status" value="1"/>
</dbReference>
<dbReference type="Pfam" id="PF21176">
    <property type="entry name" value="RecR_HhH"/>
    <property type="match status" value="1"/>
</dbReference>
<dbReference type="Pfam" id="PF02132">
    <property type="entry name" value="RecR_ZnF"/>
    <property type="match status" value="1"/>
</dbReference>
<dbReference type="Pfam" id="PF13662">
    <property type="entry name" value="Toprim_4"/>
    <property type="match status" value="1"/>
</dbReference>
<dbReference type="SMART" id="SM00493">
    <property type="entry name" value="TOPRIM"/>
    <property type="match status" value="1"/>
</dbReference>
<dbReference type="SUPFAM" id="SSF111304">
    <property type="entry name" value="Recombination protein RecR"/>
    <property type="match status" value="1"/>
</dbReference>
<dbReference type="PROSITE" id="PS01300">
    <property type="entry name" value="RECR"/>
    <property type="match status" value="1"/>
</dbReference>
<dbReference type="PROSITE" id="PS50880">
    <property type="entry name" value="TOPRIM"/>
    <property type="match status" value="1"/>
</dbReference>
<gene>
    <name evidence="1" type="primary">recR</name>
    <name type="ordered locus">spyM18_1432</name>
</gene>
<keyword id="KW-0227">DNA damage</keyword>
<keyword id="KW-0233">DNA recombination</keyword>
<keyword id="KW-0234">DNA repair</keyword>
<keyword id="KW-0479">Metal-binding</keyword>
<keyword id="KW-0862">Zinc</keyword>
<keyword id="KW-0863">Zinc-finger</keyword>